<protein>
    <recommendedName>
        <fullName>Uncharacterized protein C18orf19 homolog B</fullName>
    </recommendedName>
</protein>
<keyword id="KW-0175">Coiled coil</keyword>
<keyword id="KW-0472">Membrane</keyword>
<keyword id="KW-1185">Reference proteome</keyword>
<keyword id="KW-0812">Transmembrane</keyword>
<keyword id="KW-1133">Transmembrane helix</keyword>
<reference key="1">
    <citation type="submission" date="2005-02" db="EMBL/GenBank/DDBJ databases">
        <authorList>
            <consortium name="NIH - Zebrafish Gene Collection (ZGC) project"/>
        </authorList>
    </citation>
    <scope>NUCLEOTIDE SEQUENCE [LARGE SCALE MRNA]</scope>
    <source>
        <tissue>Embryo</tissue>
    </source>
</reference>
<feature type="chain" id="PRO_0000274430" description="Uncharacterized protein C18orf19 homolog B">
    <location>
        <begin position="1"/>
        <end position="280"/>
    </location>
</feature>
<feature type="transmembrane region" description="Helical" evidence="1">
    <location>
        <begin position="115"/>
        <end position="135"/>
    </location>
</feature>
<feature type="domain" description="DUF1279">
    <location>
        <begin position="96"/>
        <end position="208"/>
    </location>
</feature>
<feature type="region of interest" description="Disordered" evidence="2">
    <location>
        <begin position="245"/>
        <end position="280"/>
    </location>
</feature>
<feature type="coiled-coil region" evidence="1">
    <location>
        <begin position="207"/>
        <end position="274"/>
    </location>
</feature>
<evidence type="ECO:0000255" key="1"/>
<evidence type="ECO:0000256" key="2">
    <source>
        <dbReference type="SAM" id="MobiDB-lite"/>
    </source>
</evidence>
<evidence type="ECO:0000305" key="3"/>
<dbReference type="EMBL" id="BC090760">
    <property type="protein sequence ID" value="AAH90760.1"/>
    <property type="molecule type" value="mRNA"/>
</dbReference>
<dbReference type="RefSeq" id="NP_001013358.1">
    <property type="nucleotide sequence ID" value="NM_001013340.1"/>
</dbReference>
<dbReference type="SMR" id="Q5CZQ0"/>
<dbReference type="FunCoup" id="Q5CZQ0">
    <property type="interactions" value="40"/>
</dbReference>
<dbReference type="STRING" id="7955.ENSDARP00000058784"/>
<dbReference type="PaxDb" id="7955-ENSDARP00000090299"/>
<dbReference type="GeneID" id="503762"/>
<dbReference type="KEGG" id="dre:503762"/>
<dbReference type="AGR" id="ZFIN:ZDB-GENE-050306-43"/>
<dbReference type="CTD" id="503762"/>
<dbReference type="ZFIN" id="ZDB-GENE-050306-43">
    <property type="gene designation" value="fam210ab"/>
</dbReference>
<dbReference type="eggNOG" id="KOG4082">
    <property type="taxonomic scope" value="Eukaryota"/>
</dbReference>
<dbReference type="InParanoid" id="Q5CZQ0"/>
<dbReference type="OrthoDB" id="5874039at2759"/>
<dbReference type="PhylomeDB" id="Q5CZQ0"/>
<dbReference type="PRO" id="PR:Q5CZQ0"/>
<dbReference type="Proteomes" id="UP000000437">
    <property type="component" value="Chromosome 16"/>
</dbReference>
<dbReference type="GO" id="GO:0016020">
    <property type="term" value="C:membrane"/>
    <property type="evidence" value="ECO:0007669"/>
    <property type="project" value="UniProtKB-SubCell"/>
</dbReference>
<dbReference type="GO" id="GO:0005739">
    <property type="term" value="C:mitochondrion"/>
    <property type="evidence" value="ECO:0000318"/>
    <property type="project" value="GO_Central"/>
</dbReference>
<dbReference type="Gene3D" id="1.20.120.20">
    <property type="entry name" value="Apolipoprotein"/>
    <property type="match status" value="1"/>
</dbReference>
<dbReference type="InterPro" id="IPR045866">
    <property type="entry name" value="FAM210A/B-like"/>
</dbReference>
<dbReference type="InterPro" id="IPR009688">
    <property type="entry name" value="FAM210A/B-like_dom"/>
</dbReference>
<dbReference type="PANTHER" id="PTHR21377:SF1">
    <property type="entry name" value="PROTEIN FAM210A"/>
    <property type="match status" value="1"/>
</dbReference>
<dbReference type="PANTHER" id="PTHR21377">
    <property type="entry name" value="PROTEIN FAM210B, MITOCHONDRIAL"/>
    <property type="match status" value="1"/>
</dbReference>
<dbReference type="Pfam" id="PF06916">
    <property type="entry name" value="FAM210A-B_dom"/>
    <property type="match status" value="1"/>
</dbReference>
<dbReference type="SUPFAM" id="SSF58113">
    <property type="entry name" value="Apolipoprotein A-I"/>
    <property type="match status" value="1"/>
</dbReference>
<gene>
    <name type="ORF">zgc:113036</name>
</gene>
<name>CR19B_DANRE</name>
<accession>Q5CZQ0</accession>
<sequence length="280" mass="32340">MQRLWAPVTLRRVLLLRSVYLPHSWAMQEPRLAVLSPRYFSCTNAIRAKEAHKTSTEEQEEVPLNPPQSLAGTEGLYKADSEPVPHNKGDIDPLQDKSIGIFQRFKKTFKQYGKVMVPVHIVTSTVWFGSFYYAAMKGVNLVPFLEFIGLPDWIVGILRDSQGGYALTAYAMYKLATPARYTVTMGGTSLSVQYLRKHGYLSTPPPVKEFLQDKMEETRELLTEKMEETKERFSEKMEETKELLSERMEETKERFSETKDKFSEKLQETKDKMSFRKKAD</sequence>
<comment type="subcellular location">
    <subcellularLocation>
        <location evidence="3">Membrane</location>
        <topology evidence="3">Single-pass membrane protein</topology>
    </subcellularLocation>
</comment>
<proteinExistence type="evidence at transcript level"/>
<organism>
    <name type="scientific">Danio rerio</name>
    <name type="common">Zebrafish</name>
    <name type="synonym">Brachydanio rerio</name>
    <dbReference type="NCBI Taxonomy" id="7955"/>
    <lineage>
        <taxon>Eukaryota</taxon>
        <taxon>Metazoa</taxon>
        <taxon>Chordata</taxon>
        <taxon>Craniata</taxon>
        <taxon>Vertebrata</taxon>
        <taxon>Euteleostomi</taxon>
        <taxon>Actinopterygii</taxon>
        <taxon>Neopterygii</taxon>
        <taxon>Teleostei</taxon>
        <taxon>Ostariophysi</taxon>
        <taxon>Cypriniformes</taxon>
        <taxon>Danionidae</taxon>
        <taxon>Danioninae</taxon>
        <taxon>Danio</taxon>
    </lineage>
</organism>